<keyword id="KW-0249">Electron transport</keyword>
<keyword id="KW-0472">Membrane</keyword>
<keyword id="KW-0496">Mitochondrion</keyword>
<keyword id="KW-0999">Mitochondrion inner membrane</keyword>
<keyword id="KW-0520">NAD</keyword>
<keyword id="KW-0679">Respiratory chain</keyword>
<keyword id="KW-1278">Translocase</keyword>
<keyword id="KW-0812">Transmembrane</keyword>
<keyword id="KW-1133">Transmembrane helix</keyword>
<keyword id="KW-0813">Transport</keyword>
<keyword id="KW-0830">Ubiquinone</keyword>
<protein>
    <recommendedName>
        <fullName>NADH-ubiquinone oxidoreductase chain 5</fullName>
        <ecNumber>7.1.1.2</ecNumber>
    </recommendedName>
    <alternativeName>
        <fullName>NADH dehydrogenase subunit 5</fullName>
    </alternativeName>
</protein>
<proteinExistence type="inferred from homology"/>
<name>NU5M_LYCSM</name>
<accession>O79556</accession>
<comment type="function">
    <text evidence="1">Core subunit of the mitochondrial membrane respiratory chain NADH dehydrogenase (Complex I) that is believed to belong to the minimal assembly required for catalysis. Complex I functions in the transfer of electrons from NADH to the respiratory chain. The immediate electron acceptor for the enzyme is believed to be ubiquinone (By similarity).</text>
</comment>
<comment type="catalytic activity">
    <reaction>
        <text>a ubiquinone + NADH + 5 H(+)(in) = a ubiquinol + NAD(+) + 4 H(+)(out)</text>
        <dbReference type="Rhea" id="RHEA:29091"/>
        <dbReference type="Rhea" id="RHEA-COMP:9565"/>
        <dbReference type="Rhea" id="RHEA-COMP:9566"/>
        <dbReference type="ChEBI" id="CHEBI:15378"/>
        <dbReference type="ChEBI" id="CHEBI:16389"/>
        <dbReference type="ChEBI" id="CHEBI:17976"/>
        <dbReference type="ChEBI" id="CHEBI:57540"/>
        <dbReference type="ChEBI" id="CHEBI:57945"/>
        <dbReference type="EC" id="7.1.1.2"/>
    </reaction>
</comment>
<comment type="subcellular location">
    <subcellularLocation>
        <location evidence="1">Mitochondrion inner membrane</location>
        <topology evidence="1">Multi-pass membrane protein</topology>
    </subcellularLocation>
</comment>
<comment type="similarity">
    <text evidence="3">Belongs to the complex I subunit 5 family.</text>
</comment>
<sequence>MNLITPTIILTIMLSLMMSIMQPHNNTKNNLMVLFLISLIPINPLLNNNELTLTLTPLIISPTENINISITLDTASLLFTPIALFITWSITEFSLWYMATDPNINKFIKYLLTFLITMLVIITANNMYQLFIGWEGVGIMSFLLIGWWHGRQDANTAALQAIIYNRIGDIGLIMTTAWMMTTSSINMQELMIQHEVVNIIPLLGLVAAATGKSAQFSLHPWLPSAMEGPTPVSALLHSSTMVVAGVFLLIRLHPILHNNKIMLTCCLILGATTTMFAAAAATTYFDIKKIIALSTTSQLGLMMTMIGLNQPTLAFLHMITHSFFKAMLFLCSGSYIHNLNNEQDIRMMGGLLKTLPMTSSFLTIANLSLMGMPFLSGFYSKDTIIETLANSYTNSWAIMITMIATILSACYSTQIMLFTIMEHPRTHHTTHKETKNITHPLARLMLTSILMGTMTKMSTLQTTTMVTMPKTIKLMALISTIIGVLLSKDLTHMTHHMKPKKPNKQNMFFNQLAFFNIPHRTITINTLKISQQTSTELMDLWTLEVWGPKGLSNTITNTIHLLTQQKNMIKNYMAIFTMTTMTVLLFIMSK</sequence>
<reference key="1">
    <citation type="journal article" date="1998" name="Genetics">
        <title>The complete nucleotide sequence of a snake (Dinodon semicarinatus) mitochondrial genome with two identical control regions.</title>
        <authorList>
            <person name="Kumazawa Y."/>
            <person name="Ota H."/>
            <person name="Nishida M."/>
            <person name="Ozawa T."/>
        </authorList>
    </citation>
    <scope>NUCLEOTIDE SEQUENCE [GENOMIC DNA]</scope>
    <source>
        <tissue>Liver</tissue>
    </source>
</reference>
<feature type="chain" id="PRO_0000118089" description="NADH-ubiquinone oxidoreductase chain 5">
    <location>
        <begin position="1"/>
        <end position="590"/>
    </location>
</feature>
<feature type="transmembrane region" description="Helical" evidence="2">
    <location>
        <begin position="1"/>
        <end position="21"/>
    </location>
</feature>
<feature type="transmembrane region" description="Helical" evidence="2">
    <location>
        <begin position="31"/>
        <end position="51"/>
    </location>
</feature>
<feature type="transmembrane region" description="Helical" evidence="2">
    <location>
        <begin position="77"/>
        <end position="97"/>
    </location>
</feature>
<feature type="transmembrane region" description="Helical" evidence="2">
    <location>
        <begin position="104"/>
        <end position="124"/>
    </location>
</feature>
<feature type="transmembrane region" description="Helical" evidence="2">
    <location>
        <begin position="130"/>
        <end position="150"/>
    </location>
</feature>
<feature type="transmembrane region" description="Helical" evidence="2">
    <location>
        <begin position="167"/>
        <end position="187"/>
    </location>
</feature>
<feature type="transmembrane region" description="Helical" evidence="2">
    <location>
        <begin position="190"/>
        <end position="210"/>
    </location>
</feature>
<feature type="transmembrane region" description="Helical" evidence="2">
    <location>
        <begin position="230"/>
        <end position="250"/>
    </location>
</feature>
<feature type="transmembrane region" description="Helical" evidence="2">
    <location>
        <begin position="261"/>
        <end position="281"/>
    </location>
</feature>
<feature type="transmembrane region" description="Helical" evidence="2">
    <location>
        <begin position="314"/>
        <end position="336"/>
    </location>
</feature>
<feature type="transmembrane region" description="Helical" evidence="2">
    <location>
        <begin position="355"/>
        <end position="375"/>
    </location>
</feature>
<feature type="transmembrane region" description="Helical" evidence="2">
    <location>
        <begin position="398"/>
        <end position="418"/>
    </location>
</feature>
<feature type="transmembrane region" description="Helical" evidence="2">
    <location>
        <begin position="439"/>
        <end position="461"/>
    </location>
</feature>
<feature type="transmembrane region" description="Helical" evidence="2">
    <location>
        <begin position="466"/>
        <end position="486"/>
    </location>
</feature>
<feature type="transmembrane region" description="Helical" evidence="2">
    <location>
        <begin position="568"/>
        <end position="588"/>
    </location>
</feature>
<dbReference type="EC" id="7.1.1.2"/>
<dbReference type="EMBL" id="AB008539">
    <property type="protein sequence ID" value="BAA33032.1"/>
    <property type="molecule type" value="Genomic_DNA"/>
</dbReference>
<dbReference type="PIR" id="T11098">
    <property type="entry name" value="T11098"/>
</dbReference>
<dbReference type="RefSeq" id="NP_008429.1">
    <property type="nucleotide sequence ID" value="NC_001945.1"/>
</dbReference>
<dbReference type="SMR" id="O79556"/>
<dbReference type="GeneID" id="808266"/>
<dbReference type="CTD" id="4540"/>
<dbReference type="GO" id="GO:0005743">
    <property type="term" value="C:mitochondrial inner membrane"/>
    <property type="evidence" value="ECO:0007669"/>
    <property type="project" value="UniProtKB-SubCell"/>
</dbReference>
<dbReference type="GO" id="GO:0008137">
    <property type="term" value="F:NADH dehydrogenase (ubiquinone) activity"/>
    <property type="evidence" value="ECO:0007669"/>
    <property type="project" value="UniProtKB-EC"/>
</dbReference>
<dbReference type="GO" id="GO:0042773">
    <property type="term" value="P:ATP synthesis coupled electron transport"/>
    <property type="evidence" value="ECO:0007669"/>
    <property type="project" value="InterPro"/>
</dbReference>
<dbReference type="GO" id="GO:0015990">
    <property type="term" value="P:electron transport coupled proton transport"/>
    <property type="evidence" value="ECO:0007669"/>
    <property type="project" value="TreeGrafter"/>
</dbReference>
<dbReference type="InterPro" id="IPR010934">
    <property type="entry name" value="NADH_DH_su5_C"/>
</dbReference>
<dbReference type="InterPro" id="IPR001750">
    <property type="entry name" value="ND/Mrp_TM"/>
</dbReference>
<dbReference type="InterPro" id="IPR003945">
    <property type="entry name" value="NU5C-like"/>
</dbReference>
<dbReference type="InterPro" id="IPR001516">
    <property type="entry name" value="Proton_antipo_N"/>
</dbReference>
<dbReference type="PANTHER" id="PTHR42829">
    <property type="entry name" value="NADH-UBIQUINONE OXIDOREDUCTASE CHAIN 5"/>
    <property type="match status" value="1"/>
</dbReference>
<dbReference type="PANTHER" id="PTHR42829:SF2">
    <property type="entry name" value="NADH-UBIQUINONE OXIDOREDUCTASE CHAIN 5"/>
    <property type="match status" value="1"/>
</dbReference>
<dbReference type="Pfam" id="PF06455">
    <property type="entry name" value="NADH5_C"/>
    <property type="match status" value="1"/>
</dbReference>
<dbReference type="Pfam" id="PF00361">
    <property type="entry name" value="Proton_antipo_M"/>
    <property type="match status" value="1"/>
</dbReference>
<dbReference type="Pfam" id="PF00662">
    <property type="entry name" value="Proton_antipo_N"/>
    <property type="match status" value="1"/>
</dbReference>
<dbReference type="PRINTS" id="PR01434">
    <property type="entry name" value="NADHDHGNASE5"/>
</dbReference>
<organism>
    <name type="scientific">Lycodon semicarinatus</name>
    <name type="common">Ryukyu odd-tooth snake</name>
    <name type="synonym">Eumesodon semicarinatus</name>
    <dbReference type="NCBI Taxonomy" id="56549"/>
    <lineage>
        <taxon>Eukaryota</taxon>
        <taxon>Metazoa</taxon>
        <taxon>Chordata</taxon>
        <taxon>Craniata</taxon>
        <taxon>Vertebrata</taxon>
        <taxon>Euteleostomi</taxon>
        <taxon>Lepidosauria</taxon>
        <taxon>Squamata</taxon>
        <taxon>Bifurcata</taxon>
        <taxon>Unidentata</taxon>
        <taxon>Episquamata</taxon>
        <taxon>Toxicofera</taxon>
        <taxon>Serpentes</taxon>
        <taxon>Colubroidea</taxon>
        <taxon>Colubridae</taxon>
        <taxon>Colubrinae</taxon>
        <taxon>Lycodon</taxon>
    </lineage>
</organism>
<geneLocation type="mitochondrion"/>
<gene>
    <name type="primary">MT-ND5</name>
    <name type="synonym">MTND5</name>
    <name type="synonym">NADH5</name>
    <name type="synonym">ND5</name>
</gene>
<evidence type="ECO:0000250" key="1"/>
<evidence type="ECO:0000255" key="2"/>
<evidence type="ECO:0000305" key="3"/>